<proteinExistence type="inferred from homology"/>
<name>DRE2_TRYB2</name>
<reference key="1">
    <citation type="journal article" date="2005" name="Science">
        <title>The genome of the African trypanosome Trypanosoma brucei.</title>
        <authorList>
            <person name="Berriman M."/>
            <person name="Ghedin E."/>
            <person name="Hertz-Fowler C."/>
            <person name="Blandin G."/>
            <person name="Renauld H."/>
            <person name="Bartholomeu D.C."/>
            <person name="Lennard N.J."/>
            <person name="Caler E."/>
            <person name="Hamlin N.E."/>
            <person name="Haas B."/>
            <person name="Bohme U."/>
            <person name="Hannick L."/>
            <person name="Aslett M.A."/>
            <person name="Shallom J."/>
            <person name="Marcello L."/>
            <person name="Hou L."/>
            <person name="Wickstead B."/>
            <person name="Alsmark U.C.M."/>
            <person name="Arrowsmith C."/>
            <person name="Atkin R.J."/>
            <person name="Barron A.J."/>
            <person name="Bringaud F."/>
            <person name="Brooks K."/>
            <person name="Carrington M."/>
            <person name="Cherevach I."/>
            <person name="Chillingworth T.J."/>
            <person name="Churcher C."/>
            <person name="Clark L.N."/>
            <person name="Corton C.H."/>
            <person name="Cronin A."/>
            <person name="Davies R.M."/>
            <person name="Doggett J."/>
            <person name="Djikeng A."/>
            <person name="Feldblyum T."/>
            <person name="Field M.C."/>
            <person name="Fraser A."/>
            <person name="Goodhead I."/>
            <person name="Hance Z."/>
            <person name="Harper D."/>
            <person name="Harris B.R."/>
            <person name="Hauser H."/>
            <person name="Hostetler J."/>
            <person name="Ivens A."/>
            <person name="Jagels K."/>
            <person name="Johnson D."/>
            <person name="Johnson J."/>
            <person name="Jones K."/>
            <person name="Kerhornou A.X."/>
            <person name="Koo H."/>
            <person name="Larke N."/>
            <person name="Landfear S."/>
            <person name="Larkin C."/>
            <person name="Leech V."/>
            <person name="Line A."/>
            <person name="Lord A."/>
            <person name="Macleod A."/>
            <person name="Mooney P.J."/>
            <person name="Moule S."/>
            <person name="Martin D.M."/>
            <person name="Morgan G.W."/>
            <person name="Mungall K."/>
            <person name="Norbertczak H."/>
            <person name="Ormond D."/>
            <person name="Pai G."/>
            <person name="Peacock C.S."/>
            <person name="Peterson J."/>
            <person name="Quail M.A."/>
            <person name="Rabbinowitsch E."/>
            <person name="Rajandream M.A."/>
            <person name="Reitter C."/>
            <person name="Salzberg S.L."/>
            <person name="Sanders M."/>
            <person name="Schobel S."/>
            <person name="Sharp S."/>
            <person name="Simmonds M."/>
            <person name="Simpson A.J."/>
            <person name="Tallon L."/>
            <person name="Turner C.M."/>
            <person name="Tait A."/>
            <person name="Tivey A.R."/>
            <person name="Van Aken S."/>
            <person name="Walker D."/>
            <person name="Wanless D."/>
            <person name="Wang S."/>
            <person name="White B."/>
            <person name="White O."/>
            <person name="Whitehead S."/>
            <person name="Woodward J."/>
            <person name="Wortman J."/>
            <person name="Adams M.D."/>
            <person name="Embley T.M."/>
            <person name="Gull K."/>
            <person name="Ullu E."/>
            <person name="Barry J.D."/>
            <person name="Fairlamb A.H."/>
            <person name="Opperdoes F."/>
            <person name="Barrell B.G."/>
            <person name="Donelson J.E."/>
            <person name="Hall N."/>
            <person name="Fraser C.M."/>
            <person name="Melville S.E."/>
            <person name="El-Sayed N.M.A."/>
        </authorList>
    </citation>
    <scope>NUCLEOTIDE SEQUENCE [LARGE SCALE GENOMIC DNA]</scope>
    <source>
        <strain>927/4 GUTat10.1</strain>
    </source>
</reference>
<reference key="2">
    <citation type="journal article" date="2014" name="Mol. Microbiol.">
        <title>Cytosolic iron-sulphur protein assembly is functionally conserved and essential in procyclic and bloodstream Trypanosoma brucei.</title>
        <authorList>
            <person name="Basu S."/>
            <person name="Netz D.J."/>
            <person name="Haindrich A.C."/>
            <person name="Herlerth N."/>
            <person name="Lagny T.J."/>
            <person name="Pierik A.J."/>
            <person name="Lill R."/>
            <person name="Lukes J."/>
        </authorList>
    </citation>
    <scope>FUNCTION</scope>
    <scope>COFACTOR</scope>
</reference>
<gene>
    <name type="ORF">Tb927.8.1750</name>
</gene>
<organism>
    <name type="scientific">Trypanosoma brucei brucei (strain 927/4 GUTat10.1)</name>
    <dbReference type="NCBI Taxonomy" id="185431"/>
    <lineage>
        <taxon>Eukaryota</taxon>
        <taxon>Discoba</taxon>
        <taxon>Euglenozoa</taxon>
        <taxon>Kinetoplastea</taxon>
        <taxon>Metakinetoplastina</taxon>
        <taxon>Trypanosomatida</taxon>
        <taxon>Trypanosomatidae</taxon>
        <taxon>Trypanosoma</taxon>
    </lineage>
</organism>
<accession>Q582A7</accession>
<dbReference type="EMBL" id="AC091701">
    <property type="protein sequence ID" value="AAX79396.1"/>
    <property type="molecule type" value="Genomic_DNA"/>
</dbReference>
<dbReference type="STRING" id="185431.Q582A7"/>
<dbReference type="PaxDb" id="5691-AAZ12942"/>
<dbReference type="GeneID" id="3659164"/>
<dbReference type="KEGG" id="tbr:Tb927.8.1750"/>
<dbReference type="VEuPathDB" id="TriTrypDB:Tb927.8.1750"/>
<dbReference type="eggNOG" id="KOG4020">
    <property type="taxonomic scope" value="Eukaryota"/>
</dbReference>
<dbReference type="InParanoid" id="Q582A7"/>
<dbReference type="OMA" id="TMPPGGC"/>
<dbReference type="OrthoDB" id="311633at2759"/>
<dbReference type="Proteomes" id="UP000008524">
    <property type="component" value="Chromosome 8"/>
</dbReference>
<dbReference type="GO" id="GO:0005758">
    <property type="term" value="C:mitochondrial intermembrane space"/>
    <property type="evidence" value="ECO:0007669"/>
    <property type="project" value="UniProtKB-SubCell"/>
</dbReference>
<dbReference type="GO" id="GO:0051537">
    <property type="term" value="F:2 iron, 2 sulfur cluster binding"/>
    <property type="evidence" value="ECO:0007669"/>
    <property type="project" value="UniProtKB-KW"/>
</dbReference>
<dbReference type="GO" id="GO:0051539">
    <property type="term" value="F:4 iron, 4 sulfur cluster binding"/>
    <property type="evidence" value="ECO:0007669"/>
    <property type="project" value="UniProtKB-KW"/>
</dbReference>
<dbReference type="GO" id="GO:0046872">
    <property type="term" value="F:metal ion binding"/>
    <property type="evidence" value="ECO:0007669"/>
    <property type="project" value="UniProtKB-KW"/>
</dbReference>
<dbReference type="GO" id="GO:0016226">
    <property type="term" value="P:iron-sulfur cluster assembly"/>
    <property type="evidence" value="ECO:0007669"/>
    <property type="project" value="InterPro"/>
</dbReference>
<dbReference type="InterPro" id="IPR007785">
    <property type="entry name" value="Anamorsin"/>
</dbReference>
<dbReference type="InterPro" id="IPR046408">
    <property type="entry name" value="CIAPIN1"/>
</dbReference>
<dbReference type="PANTHER" id="PTHR13273">
    <property type="entry name" value="ANAMORSIN"/>
    <property type="match status" value="1"/>
</dbReference>
<dbReference type="PANTHER" id="PTHR13273:SF14">
    <property type="entry name" value="ANAMORSIN"/>
    <property type="match status" value="1"/>
</dbReference>
<dbReference type="Pfam" id="PF05093">
    <property type="entry name" value="CIAPIN1"/>
    <property type="match status" value="1"/>
</dbReference>
<feature type="chain" id="PRO_0000392366" description="Anamorsin homolog">
    <location>
        <begin position="1"/>
        <end position="124"/>
    </location>
</feature>
<feature type="region of interest" description="Disordered" evidence="3">
    <location>
        <begin position="1"/>
        <end position="39"/>
    </location>
</feature>
<feature type="region of interest" description="Disordered" evidence="1">
    <location>
        <begin position="40"/>
        <end position="124"/>
    </location>
</feature>
<feature type="region of interest" description="Fe-S binding site A" evidence="1">
    <location>
        <begin position="49"/>
        <end position="61"/>
    </location>
</feature>
<feature type="region of interest" description="Fe-S binding site B" evidence="1">
    <location>
        <begin position="86"/>
        <end position="100"/>
    </location>
</feature>
<feature type="short sequence motif" description="Cx2C motif 1" evidence="1">
    <location>
        <begin position="86"/>
        <end position="89"/>
    </location>
</feature>
<feature type="short sequence motif" description="Cx2C motif 2" evidence="1">
    <location>
        <begin position="97"/>
        <end position="100"/>
    </location>
</feature>
<feature type="compositionally biased region" description="Polar residues" evidence="3">
    <location>
        <begin position="1"/>
        <end position="20"/>
    </location>
</feature>
<feature type="binding site" evidence="1">
    <location>
        <position position="49"/>
    </location>
    <ligand>
        <name>[2Fe-2S] cluster</name>
        <dbReference type="ChEBI" id="CHEBI:190135"/>
    </ligand>
</feature>
<feature type="binding site" evidence="1">
    <location>
        <position position="56"/>
    </location>
    <ligand>
        <name>[2Fe-2S] cluster</name>
        <dbReference type="ChEBI" id="CHEBI:190135"/>
    </ligand>
</feature>
<feature type="binding site" evidence="1">
    <location>
        <position position="59"/>
    </location>
    <ligand>
        <name>[2Fe-2S] cluster</name>
        <dbReference type="ChEBI" id="CHEBI:190135"/>
    </ligand>
</feature>
<feature type="binding site" evidence="1">
    <location>
        <position position="61"/>
    </location>
    <ligand>
        <name>[2Fe-2S] cluster</name>
        <dbReference type="ChEBI" id="CHEBI:190135"/>
    </ligand>
</feature>
<feature type="binding site" evidence="1">
    <location>
        <position position="86"/>
    </location>
    <ligand>
        <name>[4Fe-4S] cluster</name>
        <dbReference type="ChEBI" id="CHEBI:49883"/>
    </ligand>
</feature>
<feature type="binding site" evidence="1">
    <location>
        <position position="89"/>
    </location>
    <ligand>
        <name>[4Fe-4S] cluster</name>
        <dbReference type="ChEBI" id="CHEBI:49883"/>
    </ligand>
</feature>
<feature type="binding site" evidence="1">
    <location>
        <position position="97"/>
    </location>
    <ligand>
        <name>[4Fe-4S] cluster</name>
        <dbReference type="ChEBI" id="CHEBI:49883"/>
    </ligand>
</feature>
<feature type="binding site" evidence="1">
    <location>
        <position position="100"/>
    </location>
    <ligand>
        <name>[4Fe-4S] cluster</name>
        <dbReference type="ChEBI" id="CHEBI:49883"/>
    </ligand>
</feature>
<sequence length="124" mass="13129">MSSPAPSTSHNAANSTQAFSLKTRRPIDEDDLLTAEDREAKSTVEKLDCATRRRACKNCTCGRAELERQLEAGGSQVMGAMPPGGCGNCAKGDAFRCAGCPYLGMPAFDNAVDGKVKLDLTDDI</sequence>
<comment type="function">
    <text evidence="1 4">Component of the cytosolic iron-sulfur (Fe-S) protein assembly (CIA) machinery. Required for the maturation of extramitochondrial Fe-S proteins. Part of an electron transfer chain functioning in an early step of cytosolic Fe-S biogenesis, facilitating the de novo assembly of a [4Fe-4S] cluster on the cytosolic Fe-S scaffold complex. Electrons are transferred from NADPH via a FAD- and FMN-containing diflavin oxidoreductase (PubMed:25040552). Together with the diflavin oxidoreductase, also required for the assembly of the diferric tyrosyl radical cofactor of ribonucleotide reductase (RNR), probably by providing electrons for reduction during radical cofactor maturation in the catalytic small subunit (By similarity).</text>
</comment>
<comment type="cofactor">
    <cofactor evidence="4">
        <name>[2Fe-2S] cluster</name>
        <dbReference type="ChEBI" id="CHEBI:190135"/>
    </cofactor>
</comment>
<comment type="cofactor">
    <cofactor evidence="4">
        <name>[4Fe-4S] cluster</name>
        <dbReference type="ChEBI" id="CHEBI:49883"/>
    </cofactor>
</comment>
<comment type="subunit">
    <text evidence="2">Monomer.</text>
</comment>
<comment type="subcellular location">
    <subcellularLocation>
        <location evidence="1">Cytoplasm</location>
    </subcellularLocation>
    <subcellularLocation>
        <location evidence="1">Mitochondrion intermembrane space</location>
    </subcellularLocation>
</comment>
<comment type="domain">
    <text evidence="1">The C-terminal domain binds 2 Fe-S clusters but is otherwise mostly in an intrinsically disordered conformation.</text>
</comment>
<comment type="domain">
    <text evidence="1">The twin Cx2C motifs are involved in the recognition by the mitochondrial MIA40-ERV1 disulfide relay system. The formation of 2 disulfide bonds in the Cx2C motifs through dithiol/disulfide exchange reactions effectively traps the protein in the mitochondrial intermembrane space.</text>
</comment>
<comment type="similarity">
    <text evidence="5">Belongs to the anamorsin family.</text>
</comment>
<protein>
    <recommendedName>
        <fullName>Anamorsin homolog</fullName>
    </recommendedName>
    <alternativeName>
        <fullName>Fe-S cluster assembly protein DRE2 homolog</fullName>
    </alternativeName>
</protein>
<evidence type="ECO:0000250" key="1">
    <source>
        <dbReference type="UniProtKB" id="P36152"/>
    </source>
</evidence>
<evidence type="ECO:0000250" key="2">
    <source>
        <dbReference type="UniProtKB" id="Q6FI81"/>
    </source>
</evidence>
<evidence type="ECO:0000256" key="3">
    <source>
        <dbReference type="SAM" id="MobiDB-lite"/>
    </source>
</evidence>
<evidence type="ECO:0000269" key="4">
    <source>
    </source>
</evidence>
<evidence type="ECO:0000305" key="5"/>
<keyword id="KW-0001">2Fe-2S</keyword>
<keyword id="KW-0004">4Fe-4S</keyword>
<keyword id="KW-0963">Cytoplasm</keyword>
<keyword id="KW-0408">Iron</keyword>
<keyword id="KW-0411">Iron-sulfur</keyword>
<keyword id="KW-0479">Metal-binding</keyword>
<keyword id="KW-0496">Mitochondrion</keyword>
<keyword id="KW-1185">Reference proteome</keyword>